<keyword id="KW-0030">Aminoacyl-tRNA synthetase</keyword>
<keyword id="KW-0067">ATP-binding</keyword>
<keyword id="KW-0963">Cytoplasm</keyword>
<keyword id="KW-0436">Ligase</keyword>
<keyword id="KW-0547">Nucleotide-binding</keyword>
<keyword id="KW-0648">Protein biosynthesis</keyword>
<keyword id="KW-1185">Reference proteome</keyword>
<feature type="chain" id="PRO_0000122045" description="Serine--tRNA ligase">
    <location>
        <begin position="1"/>
        <end position="430"/>
    </location>
</feature>
<feature type="binding site" evidence="1">
    <location>
        <begin position="237"/>
        <end position="239"/>
    </location>
    <ligand>
        <name>L-serine</name>
        <dbReference type="ChEBI" id="CHEBI:33384"/>
    </ligand>
</feature>
<feature type="binding site" evidence="1">
    <location>
        <begin position="268"/>
        <end position="270"/>
    </location>
    <ligand>
        <name>ATP</name>
        <dbReference type="ChEBI" id="CHEBI:30616"/>
    </ligand>
</feature>
<feature type="binding site" evidence="1">
    <location>
        <position position="291"/>
    </location>
    <ligand>
        <name>L-serine</name>
        <dbReference type="ChEBI" id="CHEBI:33384"/>
    </ligand>
</feature>
<feature type="binding site" evidence="1">
    <location>
        <begin position="355"/>
        <end position="358"/>
    </location>
    <ligand>
        <name>ATP</name>
        <dbReference type="ChEBI" id="CHEBI:30616"/>
    </ligand>
</feature>
<feature type="binding site" evidence="1">
    <location>
        <position position="391"/>
    </location>
    <ligand>
        <name>L-serine</name>
        <dbReference type="ChEBI" id="CHEBI:33384"/>
    </ligand>
</feature>
<feature type="sequence conflict" description="In Ref. 1; AAG55380." evidence="2" ref="1">
    <original>T</original>
    <variation>A</variation>
    <location>
        <position position="203"/>
    </location>
</feature>
<name>SYS_ECO57</name>
<accession>P0A8L3</accession>
<accession>P09156</accession>
<organism>
    <name type="scientific">Escherichia coli O157:H7</name>
    <dbReference type="NCBI Taxonomy" id="83334"/>
    <lineage>
        <taxon>Bacteria</taxon>
        <taxon>Pseudomonadati</taxon>
        <taxon>Pseudomonadota</taxon>
        <taxon>Gammaproteobacteria</taxon>
        <taxon>Enterobacterales</taxon>
        <taxon>Enterobacteriaceae</taxon>
        <taxon>Escherichia</taxon>
    </lineage>
</organism>
<sequence length="430" mass="48414">MLDPNLLRNEPDAVAEKLARRGFKLDVDKLGALEERRKVLQVKTENLQAERNSRSKSIGQAKARGEDIEPLRLEVNKLGEELDAAKAELDALQAEIRDIALTIPNLPADEVPVGKDENDNVEVSRWGTPREFDFEVRDHVTLGEMHSGLDFAAAVKLTGSRFVVMKGQIARMHRALSQFMLDLHTEQHGYSENYVPYLVNQDTLYGTGQLPKFAGDLFHTRPLEEEADTSNYALIPTAEVPLTNLVRGEIIDEDDLPIKMTAHTPCFRSEAGSYGRDTRGLIRMHQFDKVEMVQIVRPEDSMAALEEMTGHAEKVLQLLGLPYRKIILCTGDMGFGACKTYDLEVWIPAQNTYREISSCSNVWDFQARRMQARCRSKSDKKTRLVHTLNGSGLAVGRTLVAVMENYQQADGRIEVPEVLRPYMNGLEYIG</sequence>
<protein>
    <recommendedName>
        <fullName evidence="1">Serine--tRNA ligase</fullName>
        <ecNumber evidence="1">6.1.1.11</ecNumber>
    </recommendedName>
    <alternativeName>
        <fullName evidence="1">Seryl-tRNA synthetase</fullName>
        <shortName evidence="1">SerRS</shortName>
    </alternativeName>
    <alternativeName>
        <fullName evidence="1">Seryl-tRNA(Ser/Sec) synthetase</fullName>
    </alternativeName>
</protein>
<proteinExistence type="inferred from homology"/>
<dbReference type="EC" id="6.1.1.11" evidence="1"/>
<dbReference type="EMBL" id="AE005174">
    <property type="protein sequence ID" value="AAG55380.1"/>
    <property type="molecule type" value="Genomic_DNA"/>
</dbReference>
<dbReference type="EMBL" id="BA000007">
    <property type="protein sequence ID" value="BAB34401.1"/>
    <property type="molecule type" value="Genomic_DNA"/>
</dbReference>
<dbReference type="PIR" id="B90751">
    <property type="entry name" value="B90751"/>
</dbReference>
<dbReference type="PIR" id="H85614">
    <property type="entry name" value="H85614"/>
</dbReference>
<dbReference type="RefSeq" id="NP_309005.1">
    <property type="nucleotide sequence ID" value="NC_002695.1"/>
</dbReference>
<dbReference type="RefSeq" id="WP_000886683.1">
    <property type="nucleotide sequence ID" value="NZ_VOAI01000006.1"/>
</dbReference>
<dbReference type="SMR" id="P0A8L3"/>
<dbReference type="STRING" id="155864.Z1239"/>
<dbReference type="GeneID" id="917719"/>
<dbReference type="GeneID" id="93776527"/>
<dbReference type="KEGG" id="ece:Z1239"/>
<dbReference type="KEGG" id="ecs:ECs_0978"/>
<dbReference type="PATRIC" id="fig|386585.9.peg.1095"/>
<dbReference type="eggNOG" id="COG0172">
    <property type="taxonomic scope" value="Bacteria"/>
</dbReference>
<dbReference type="HOGENOM" id="CLU_023797_1_1_6"/>
<dbReference type="OMA" id="GYTPCFR"/>
<dbReference type="UniPathway" id="UPA00906">
    <property type="reaction ID" value="UER00895"/>
</dbReference>
<dbReference type="Proteomes" id="UP000000558">
    <property type="component" value="Chromosome"/>
</dbReference>
<dbReference type="Proteomes" id="UP000002519">
    <property type="component" value="Chromosome"/>
</dbReference>
<dbReference type="GO" id="GO:0005737">
    <property type="term" value="C:cytoplasm"/>
    <property type="evidence" value="ECO:0007669"/>
    <property type="project" value="UniProtKB-SubCell"/>
</dbReference>
<dbReference type="GO" id="GO:0005524">
    <property type="term" value="F:ATP binding"/>
    <property type="evidence" value="ECO:0007669"/>
    <property type="project" value="UniProtKB-UniRule"/>
</dbReference>
<dbReference type="GO" id="GO:0004828">
    <property type="term" value="F:serine-tRNA ligase activity"/>
    <property type="evidence" value="ECO:0007669"/>
    <property type="project" value="UniProtKB-UniRule"/>
</dbReference>
<dbReference type="GO" id="GO:0016260">
    <property type="term" value="P:selenocysteine biosynthetic process"/>
    <property type="evidence" value="ECO:0007669"/>
    <property type="project" value="UniProtKB-UniRule"/>
</dbReference>
<dbReference type="GO" id="GO:0006434">
    <property type="term" value="P:seryl-tRNA aminoacylation"/>
    <property type="evidence" value="ECO:0007669"/>
    <property type="project" value="UniProtKB-UniRule"/>
</dbReference>
<dbReference type="CDD" id="cd00770">
    <property type="entry name" value="SerRS_core"/>
    <property type="match status" value="1"/>
</dbReference>
<dbReference type="FunFam" id="1.10.287.40:FF:000001">
    <property type="entry name" value="Serine--tRNA ligase"/>
    <property type="match status" value="1"/>
</dbReference>
<dbReference type="FunFam" id="3.30.930.10:FF:000018">
    <property type="entry name" value="Serine--tRNA ligase"/>
    <property type="match status" value="1"/>
</dbReference>
<dbReference type="Gene3D" id="3.30.930.10">
    <property type="entry name" value="Bira Bifunctional Protein, Domain 2"/>
    <property type="match status" value="1"/>
</dbReference>
<dbReference type="Gene3D" id="1.10.287.40">
    <property type="entry name" value="Serine-tRNA synthetase, tRNA binding domain"/>
    <property type="match status" value="1"/>
</dbReference>
<dbReference type="HAMAP" id="MF_00176">
    <property type="entry name" value="Ser_tRNA_synth_type1"/>
    <property type="match status" value="1"/>
</dbReference>
<dbReference type="InterPro" id="IPR002314">
    <property type="entry name" value="aa-tRNA-synt_IIb"/>
</dbReference>
<dbReference type="InterPro" id="IPR006195">
    <property type="entry name" value="aa-tRNA-synth_II"/>
</dbReference>
<dbReference type="InterPro" id="IPR045864">
    <property type="entry name" value="aa-tRNA-synth_II/BPL/LPL"/>
</dbReference>
<dbReference type="InterPro" id="IPR002317">
    <property type="entry name" value="Ser-tRNA-ligase_type_1"/>
</dbReference>
<dbReference type="InterPro" id="IPR015866">
    <property type="entry name" value="Ser-tRNA-synth_1_N"/>
</dbReference>
<dbReference type="InterPro" id="IPR042103">
    <property type="entry name" value="SerRS_1_N_sf"/>
</dbReference>
<dbReference type="InterPro" id="IPR033729">
    <property type="entry name" value="SerRS_core"/>
</dbReference>
<dbReference type="InterPro" id="IPR010978">
    <property type="entry name" value="tRNA-bd_arm"/>
</dbReference>
<dbReference type="NCBIfam" id="TIGR00414">
    <property type="entry name" value="serS"/>
    <property type="match status" value="1"/>
</dbReference>
<dbReference type="PANTHER" id="PTHR43697:SF1">
    <property type="entry name" value="SERINE--TRNA LIGASE"/>
    <property type="match status" value="1"/>
</dbReference>
<dbReference type="PANTHER" id="PTHR43697">
    <property type="entry name" value="SERYL-TRNA SYNTHETASE"/>
    <property type="match status" value="1"/>
</dbReference>
<dbReference type="Pfam" id="PF02403">
    <property type="entry name" value="Seryl_tRNA_N"/>
    <property type="match status" value="1"/>
</dbReference>
<dbReference type="Pfam" id="PF00587">
    <property type="entry name" value="tRNA-synt_2b"/>
    <property type="match status" value="1"/>
</dbReference>
<dbReference type="PIRSF" id="PIRSF001529">
    <property type="entry name" value="Ser-tRNA-synth_IIa"/>
    <property type="match status" value="1"/>
</dbReference>
<dbReference type="PRINTS" id="PR00981">
    <property type="entry name" value="TRNASYNTHSER"/>
</dbReference>
<dbReference type="SUPFAM" id="SSF55681">
    <property type="entry name" value="Class II aaRS and biotin synthetases"/>
    <property type="match status" value="1"/>
</dbReference>
<dbReference type="SUPFAM" id="SSF46589">
    <property type="entry name" value="tRNA-binding arm"/>
    <property type="match status" value="1"/>
</dbReference>
<dbReference type="PROSITE" id="PS50862">
    <property type="entry name" value="AA_TRNA_LIGASE_II"/>
    <property type="match status" value="1"/>
</dbReference>
<reference key="1">
    <citation type="journal article" date="2001" name="Nature">
        <title>Genome sequence of enterohaemorrhagic Escherichia coli O157:H7.</title>
        <authorList>
            <person name="Perna N.T."/>
            <person name="Plunkett G. III"/>
            <person name="Burland V."/>
            <person name="Mau B."/>
            <person name="Glasner J.D."/>
            <person name="Rose D.J."/>
            <person name="Mayhew G.F."/>
            <person name="Evans P.S."/>
            <person name="Gregor J."/>
            <person name="Kirkpatrick H.A."/>
            <person name="Posfai G."/>
            <person name="Hackett J."/>
            <person name="Klink S."/>
            <person name="Boutin A."/>
            <person name="Shao Y."/>
            <person name="Miller L."/>
            <person name="Grotbeck E.J."/>
            <person name="Davis N.W."/>
            <person name="Lim A."/>
            <person name="Dimalanta E.T."/>
            <person name="Potamousis K."/>
            <person name="Apodaca J."/>
            <person name="Anantharaman T.S."/>
            <person name="Lin J."/>
            <person name="Yen G."/>
            <person name="Schwartz D.C."/>
            <person name="Welch R.A."/>
            <person name="Blattner F.R."/>
        </authorList>
    </citation>
    <scope>NUCLEOTIDE SEQUENCE [LARGE SCALE GENOMIC DNA]</scope>
    <source>
        <strain>O157:H7 / EDL933 / ATCC 700927 / EHEC</strain>
    </source>
</reference>
<reference key="2">
    <citation type="journal article" date="2001" name="DNA Res.">
        <title>Complete genome sequence of enterohemorrhagic Escherichia coli O157:H7 and genomic comparison with a laboratory strain K-12.</title>
        <authorList>
            <person name="Hayashi T."/>
            <person name="Makino K."/>
            <person name="Ohnishi M."/>
            <person name="Kurokawa K."/>
            <person name="Ishii K."/>
            <person name="Yokoyama K."/>
            <person name="Han C.-G."/>
            <person name="Ohtsubo E."/>
            <person name="Nakayama K."/>
            <person name="Murata T."/>
            <person name="Tanaka M."/>
            <person name="Tobe T."/>
            <person name="Iida T."/>
            <person name="Takami H."/>
            <person name="Honda T."/>
            <person name="Sasakawa C."/>
            <person name="Ogasawara N."/>
            <person name="Yasunaga T."/>
            <person name="Kuhara S."/>
            <person name="Shiba T."/>
            <person name="Hattori M."/>
            <person name="Shinagawa H."/>
        </authorList>
    </citation>
    <scope>NUCLEOTIDE SEQUENCE [LARGE SCALE GENOMIC DNA]</scope>
    <source>
        <strain>O157:H7 / Sakai / RIMD 0509952 / EHEC</strain>
    </source>
</reference>
<gene>
    <name evidence="1" type="primary">serS</name>
    <name type="ordered locus">Z1239</name>
    <name type="ordered locus">ECs0978</name>
</gene>
<evidence type="ECO:0000255" key="1">
    <source>
        <dbReference type="HAMAP-Rule" id="MF_00176"/>
    </source>
</evidence>
<evidence type="ECO:0000305" key="2"/>
<comment type="function">
    <text evidence="1">Catalyzes the attachment of serine to tRNA(Ser). Is also able to aminoacylate tRNA(Sec) with serine, to form the misacylated tRNA L-seryl-tRNA(Sec), which will be further converted into selenocysteinyl-tRNA(Sec).</text>
</comment>
<comment type="catalytic activity">
    <reaction evidence="1">
        <text>tRNA(Ser) + L-serine + ATP = L-seryl-tRNA(Ser) + AMP + diphosphate + H(+)</text>
        <dbReference type="Rhea" id="RHEA:12292"/>
        <dbReference type="Rhea" id="RHEA-COMP:9669"/>
        <dbReference type="Rhea" id="RHEA-COMP:9703"/>
        <dbReference type="ChEBI" id="CHEBI:15378"/>
        <dbReference type="ChEBI" id="CHEBI:30616"/>
        <dbReference type="ChEBI" id="CHEBI:33019"/>
        <dbReference type="ChEBI" id="CHEBI:33384"/>
        <dbReference type="ChEBI" id="CHEBI:78442"/>
        <dbReference type="ChEBI" id="CHEBI:78533"/>
        <dbReference type="ChEBI" id="CHEBI:456215"/>
        <dbReference type="EC" id="6.1.1.11"/>
    </reaction>
</comment>
<comment type="catalytic activity">
    <reaction evidence="1">
        <text>tRNA(Sec) + L-serine + ATP = L-seryl-tRNA(Sec) + AMP + diphosphate + H(+)</text>
        <dbReference type="Rhea" id="RHEA:42580"/>
        <dbReference type="Rhea" id="RHEA-COMP:9742"/>
        <dbReference type="Rhea" id="RHEA-COMP:10128"/>
        <dbReference type="ChEBI" id="CHEBI:15378"/>
        <dbReference type="ChEBI" id="CHEBI:30616"/>
        <dbReference type="ChEBI" id="CHEBI:33019"/>
        <dbReference type="ChEBI" id="CHEBI:33384"/>
        <dbReference type="ChEBI" id="CHEBI:78442"/>
        <dbReference type="ChEBI" id="CHEBI:78533"/>
        <dbReference type="ChEBI" id="CHEBI:456215"/>
        <dbReference type="EC" id="6.1.1.11"/>
    </reaction>
</comment>
<comment type="pathway">
    <text evidence="1">Aminoacyl-tRNA biosynthesis; selenocysteinyl-tRNA(Sec) biosynthesis; L-seryl-tRNA(Sec) from L-serine and tRNA(Sec): step 1/1.</text>
</comment>
<comment type="subunit">
    <text evidence="1">Homodimer. The tRNA molecule binds across the dimer.</text>
</comment>
<comment type="subcellular location">
    <subcellularLocation>
        <location evidence="1">Cytoplasm</location>
    </subcellularLocation>
</comment>
<comment type="domain">
    <text evidence="1">Consists of two distinct domains, a catalytic core and a N-terminal extension that is involved in tRNA binding.</text>
</comment>
<comment type="similarity">
    <text evidence="1">Belongs to the class-II aminoacyl-tRNA synthetase family. Type-1 seryl-tRNA synthetase subfamily.</text>
</comment>